<evidence type="ECO:0000255" key="1">
    <source>
        <dbReference type="HAMAP-Rule" id="MF_00017"/>
    </source>
</evidence>
<reference key="1">
    <citation type="journal article" date="2008" name="Genome Res.">
        <title>Chlamydia trachomatis: genome sequence analysis of lymphogranuloma venereum isolates.</title>
        <authorList>
            <person name="Thomson N.R."/>
            <person name="Holden M.T.G."/>
            <person name="Carder C."/>
            <person name="Lennard N."/>
            <person name="Lockey S.J."/>
            <person name="Marsh P."/>
            <person name="Skipp P."/>
            <person name="O'Connor C.D."/>
            <person name="Goodhead I."/>
            <person name="Norbertzcak H."/>
            <person name="Harris B."/>
            <person name="Ormond D."/>
            <person name="Rance R."/>
            <person name="Quail M.A."/>
            <person name="Parkhill J."/>
            <person name="Stephens R.S."/>
            <person name="Clarke I.N."/>
        </authorList>
    </citation>
    <scope>NUCLEOTIDE SEQUENCE [LARGE SCALE GENOMIC DNA]</scope>
    <source>
        <strain>ATCC VR-902B / DSM 19102 / 434/Bu</strain>
    </source>
</reference>
<gene>
    <name evidence="1" type="primary">recR</name>
    <name type="ordered locus">CTL0492</name>
</gene>
<sequence>MLKYPDYISKLISFLKKLPGIGFKSAEKIAFELLEWDPSQIEAMALALQEFSTSHATCSNCFCLKISQTSPCNFCSESRDSSSLCIVATPKDVFALEKSKIFKGHYFVLGNLLSPITGKHLSLEKLAILKQRIEACSPKEMIIALDATLEGDATALFLKQEFSYLPIKISRLALGMPVGLSFDFVDANTLARAFSGRNCF</sequence>
<keyword id="KW-0227">DNA damage</keyword>
<keyword id="KW-0233">DNA recombination</keyword>
<keyword id="KW-0234">DNA repair</keyword>
<keyword id="KW-0479">Metal-binding</keyword>
<keyword id="KW-0862">Zinc</keyword>
<keyword id="KW-0863">Zinc-finger</keyword>
<dbReference type="EMBL" id="AM884176">
    <property type="protein sequence ID" value="CAP03932.1"/>
    <property type="molecule type" value="Genomic_DNA"/>
</dbReference>
<dbReference type="RefSeq" id="WP_009872491.1">
    <property type="nucleotide sequence ID" value="NC_010287.1"/>
</dbReference>
<dbReference type="RefSeq" id="YP_001654569.1">
    <property type="nucleotide sequence ID" value="NC_010287.1"/>
</dbReference>
<dbReference type="SMR" id="B0B7F6"/>
<dbReference type="KEGG" id="ctb:CTL0492"/>
<dbReference type="PATRIC" id="fig|471472.4.peg.528"/>
<dbReference type="HOGENOM" id="CLU_060739_1_1_0"/>
<dbReference type="Proteomes" id="UP001154402">
    <property type="component" value="Chromosome"/>
</dbReference>
<dbReference type="GO" id="GO:0003677">
    <property type="term" value="F:DNA binding"/>
    <property type="evidence" value="ECO:0007669"/>
    <property type="project" value="UniProtKB-UniRule"/>
</dbReference>
<dbReference type="GO" id="GO:0008270">
    <property type="term" value="F:zinc ion binding"/>
    <property type="evidence" value="ECO:0007669"/>
    <property type="project" value="UniProtKB-KW"/>
</dbReference>
<dbReference type="GO" id="GO:0006310">
    <property type="term" value="P:DNA recombination"/>
    <property type="evidence" value="ECO:0007669"/>
    <property type="project" value="UniProtKB-UniRule"/>
</dbReference>
<dbReference type="GO" id="GO:0006281">
    <property type="term" value="P:DNA repair"/>
    <property type="evidence" value="ECO:0007669"/>
    <property type="project" value="UniProtKB-UniRule"/>
</dbReference>
<dbReference type="CDD" id="cd01025">
    <property type="entry name" value="TOPRIM_recR"/>
    <property type="match status" value="1"/>
</dbReference>
<dbReference type="Gene3D" id="3.40.1360.10">
    <property type="match status" value="1"/>
</dbReference>
<dbReference type="Gene3D" id="1.10.8.420">
    <property type="entry name" value="RecR Domain 1"/>
    <property type="match status" value="1"/>
</dbReference>
<dbReference type="HAMAP" id="MF_00017">
    <property type="entry name" value="RecR"/>
    <property type="match status" value="1"/>
</dbReference>
<dbReference type="InterPro" id="IPR000093">
    <property type="entry name" value="DNA_Rcmb_RecR"/>
</dbReference>
<dbReference type="InterPro" id="IPR023627">
    <property type="entry name" value="Rcmb_RecR"/>
</dbReference>
<dbReference type="InterPro" id="IPR015967">
    <property type="entry name" value="Rcmb_RecR_Znf"/>
</dbReference>
<dbReference type="InterPro" id="IPR006171">
    <property type="entry name" value="TOPRIM_dom"/>
</dbReference>
<dbReference type="InterPro" id="IPR034137">
    <property type="entry name" value="TOPRIM_RecR"/>
</dbReference>
<dbReference type="NCBIfam" id="TIGR00615">
    <property type="entry name" value="recR"/>
    <property type="match status" value="1"/>
</dbReference>
<dbReference type="PANTHER" id="PTHR30446">
    <property type="entry name" value="RECOMBINATION PROTEIN RECR"/>
    <property type="match status" value="1"/>
</dbReference>
<dbReference type="PANTHER" id="PTHR30446:SF0">
    <property type="entry name" value="RECOMBINATION PROTEIN RECR"/>
    <property type="match status" value="1"/>
</dbReference>
<dbReference type="Pfam" id="PF21175">
    <property type="entry name" value="RecR_C"/>
    <property type="match status" value="1"/>
</dbReference>
<dbReference type="Pfam" id="PF21176">
    <property type="entry name" value="RecR_HhH"/>
    <property type="match status" value="1"/>
</dbReference>
<dbReference type="Pfam" id="PF13662">
    <property type="entry name" value="Toprim_4"/>
    <property type="match status" value="1"/>
</dbReference>
<dbReference type="SMART" id="SM00493">
    <property type="entry name" value="TOPRIM"/>
    <property type="match status" value="1"/>
</dbReference>
<dbReference type="SUPFAM" id="SSF111304">
    <property type="entry name" value="Recombination protein RecR"/>
    <property type="match status" value="1"/>
</dbReference>
<dbReference type="PROSITE" id="PS01300">
    <property type="entry name" value="RECR"/>
    <property type="match status" value="1"/>
</dbReference>
<dbReference type="PROSITE" id="PS50880">
    <property type="entry name" value="TOPRIM"/>
    <property type="match status" value="1"/>
</dbReference>
<feature type="chain" id="PRO_1000089717" description="Recombination protein RecR">
    <location>
        <begin position="1"/>
        <end position="200"/>
    </location>
</feature>
<feature type="domain" description="Toprim" evidence="1">
    <location>
        <begin position="82"/>
        <end position="177"/>
    </location>
</feature>
<feature type="zinc finger region" description="C4-type" evidence="1">
    <location>
        <begin position="58"/>
        <end position="75"/>
    </location>
</feature>
<comment type="function">
    <text evidence="1">May play a role in DNA repair. It seems to be involved in an RecBC-independent recombinational process of DNA repair. It may act with RecF and RecO.</text>
</comment>
<comment type="similarity">
    <text evidence="1">Belongs to the RecR family.</text>
</comment>
<name>RECR_CHLT2</name>
<proteinExistence type="inferred from homology"/>
<protein>
    <recommendedName>
        <fullName evidence="1">Recombination protein RecR</fullName>
    </recommendedName>
</protein>
<accession>B0B7F6</accession>
<organism>
    <name type="scientific">Chlamydia trachomatis serovar L2 (strain ATCC VR-902B / DSM 19102 / 434/Bu)</name>
    <dbReference type="NCBI Taxonomy" id="471472"/>
    <lineage>
        <taxon>Bacteria</taxon>
        <taxon>Pseudomonadati</taxon>
        <taxon>Chlamydiota</taxon>
        <taxon>Chlamydiia</taxon>
        <taxon>Chlamydiales</taxon>
        <taxon>Chlamydiaceae</taxon>
        <taxon>Chlamydia/Chlamydophila group</taxon>
        <taxon>Chlamydia</taxon>
    </lineage>
</organism>